<gene>
    <name type="primary">EHHADH</name>
</gene>
<proteinExistence type="evidence at transcript level"/>
<sequence>MAEYLRLPHSLALIRLRNPPVNAISPAVIHGIKEGLQKAMSDYTIKGIVISGANNIFCAGADIHGFSAPLSFGTGSGLGPIVDEMQRYEKPVVAAIQGMALGGGLELSLGCHYRIAHAEARIGFPEVTLGILPGARGTQLLPRLIGVPAALDLITSGRHITAGEALKLGILDKVVNSAPVEEAIKFAQKILNQPLEPRRILNRPVSSLPNMDAIFGEAVEKMRRQHPGQLAPETCVRSVQASVQYPYEGGIMKERELFLNLQHSGQAKALQYAFFAERSAPKWSTPSGASWKTAAARPVSSVGVLGLGTMGRGIAISFARVGIPVIAVESDPKQLETAQKLITSILEKEASKSRQQCGQQRSGPKPRFSSSMKDLASVDLVVEAVFEDMNLKKRVFAELSAVCKPEAFLCTNTSALDVDEIATSTNRPQQVIGTHFFSPAHVMKLLEVIPSRHSSPTTIATVMDLAKKIKKVAVVVGNCYGFVGNRMLRSYYEQTNFLLEDGSKPEDIDQALEEFGFRMGPFRVSDLAGLDVGWKIRKGQGLTGPSLQGTAPARKRGNARYSPIADMLCELGRFGQKTGQGWYKYDKPLGRIHKPDPWLSKFLSEYRETHHIKPRVIGRDEILERCLYALINEAFRILGEGIAASPEHIDVIYLHGYGWPRHKGGPMFYAASVGLPTVLEKLQKYYQQNPDIPHLEPCNYLKKLASQGNPPLKEWQSLAGLPSSKL</sequence>
<dbReference type="EC" id="4.2.1.17"/>
<dbReference type="EC" id="5.3.3.8"/>
<dbReference type="EC" id="1.1.1.35"/>
<dbReference type="EMBL" id="X92742">
    <property type="protein sequence ID" value="CAA63403.1"/>
    <property type="molecule type" value="mRNA"/>
</dbReference>
<dbReference type="EMBL" id="X85112">
    <property type="protein sequence ID" value="CAA59431.1"/>
    <property type="molecule type" value="mRNA"/>
</dbReference>
<dbReference type="PIR" id="S68697">
    <property type="entry name" value="S57651"/>
</dbReference>
<dbReference type="RefSeq" id="NP_001166417.1">
    <property type="nucleotide sequence ID" value="NM_001172946.1"/>
</dbReference>
<dbReference type="SMR" id="P55100"/>
<dbReference type="FunCoup" id="P55100">
    <property type="interactions" value="1456"/>
</dbReference>
<dbReference type="STRING" id="10141.ENSCPOP00000025721"/>
<dbReference type="GeneID" id="100135519"/>
<dbReference type="KEGG" id="cpoc:100135519"/>
<dbReference type="eggNOG" id="KOG1683">
    <property type="taxonomic scope" value="Eukaryota"/>
</dbReference>
<dbReference type="InParanoid" id="P55100"/>
<dbReference type="OrthoDB" id="2018133at2759"/>
<dbReference type="UniPathway" id="UPA00659"/>
<dbReference type="Proteomes" id="UP000005447">
    <property type="component" value="Unassembled WGS sequence"/>
</dbReference>
<dbReference type="GO" id="GO:0005777">
    <property type="term" value="C:peroxisome"/>
    <property type="evidence" value="ECO:0000250"/>
    <property type="project" value="UniProtKB"/>
</dbReference>
<dbReference type="GO" id="GO:0003857">
    <property type="term" value="F:3-hydroxyacyl-CoA dehydrogenase activity"/>
    <property type="evidence" value="ECO:0000250"/>
    <property type="project" value="UniProtKB"/>
</dbReference>
<dbReference type="GO" id="GO:0004165">
    <property type="term" value="F:delta(3)-delta(2)-enoyl-CoA isomerase activity"/>
    <property type="evidence" value="ECO:0000250"/>
    <property type="project" value="UniProtKB"/>
</dbReference>
<dbReference type="GO" id="GO:0004300">
    <property type="term" value="F:enoyl-CoA hydratase activity"/>
    <property type="evidence" value="ECO:0000250"/>
    <property type="project" value="UniProtKB"/>
</dbReference>
<dbReference type="GO" id="GO:0016863">
    <property type="term" value="F:intramolecular oxidoreductase activity, transposing C=C bonds"/>
    <property type="evidence" value="ECO:0000250"/>
    <property type="project" value="UniProtKB"/>
</dbReference>
<dbReference type="GO" id="GO:0016509">
    <property type="term" value="F:long-chain-3-hydroxyacyl-CoA dehydrogenase activity"/>
    <property type="evidence" value="ECO:0000250"/>
    <property type="project" value="UniProtKB"/>
</dbReference>
<dbReference type="GO" id="GO:0070403">
    <property type="term" value="F:NAD+ binding"/>
    <property type="evidence" value="ECO:0007669"/>
    <property type="project" value="InterPro"/>
</dbReference>
<dbReference type="GO" id="GO:0006635">
    <property type="term" value="P:fatty acid beta-oxidation"/>
    <property type="evidence" value="ECO:0000250"/>
    <property type="project" value="UniProtKB"/>
</dbReference>
<dbReference type="CDD" id="cd06558">
    <property type="entry name" value="crotonase-like"/>
    <property type="match status" value="1"/>
</dbReference>
<dbReference type="FunFam" id="1.10.1040.50:FF:000006">
    <property type="entry name" value="Peroxisomal bifunctional enzyme"/>
    <property type="match status" value="1"/>
</dbReference>
<dbReference type="FunFam" id="3.90.226.10:FF:000052">
    <property type="entry name" value="Peroxisomal bifunctional enzyme"/>
    <property type="match status" value="1"/>
</dbReference>
<dbReference type="FunFam" id="3.40.50.720:FF:000296">
    <property type="entry name" value="peroxisomal bifunctional enzyme isoform X1"/>
    <property type="match status" value="1"/>
</dbReference>
<dbReference type="Gene3D" id="1.10.1040.50">
    <property type="match status" value="1"/>
</dbReference>
<dbReference type="Gene3D" id="3.90.226.10">
    <property type="entry name" value="2-enoyl-CoA Hydratase, Chain A, domain 1"/>
    <property type="match status" value="1"/>
</dbReference>
<dbReference type="Gene3D" id="3.40.50.720">
    <property type="entry name" value="NAD(P)-binding Rossmann-like Domain"/>
    <property type="match status" value="1"/>
</dbReference>
<dbReference type="InterPro" id="IPR006176">
    <property type="entry name" value="3-OHacyl-CoA_DH_NAD-bd"/>
</dbReference>
<dbReference type="InterPro" id="IPR006108">
    <property type="entry name" value="3HC_DH_C"/>
</dbReference>
<dbReference type="InterPro" id="IPR008927">
    <property type="entry name" value="6-PGluconate_DH-like_C_sf"/>
</dbReference>
<dbReference type="InterPro" id="IPR029045">
    <property type="entry name" value="ClpP/crotonase-like_dom_sf"/>
</dbReference>
<dbReference type="InterPro" id="IPR018376">
    <property type="entry name" value="Enoyl-CoA_hyd/isom_CS"/>
</dbReference>
<dbReference type="InterPro" id="IPR001753">
    <property type="entry name" value="Enoyl-CoA_hydra/iso"/>
</dbReference>
<dbReference type="InterPro" id="IPR036291">
    <property type="entry name" value="NAD(P)-bd_dom_sf"/>
</dbReference>
<dbReference type="PANTHER" id="PTHR23309">
    <property type="entry name" value="3-HYDROXYACYL-COA DEHYROGENASE"/>
    <property type="match status" value="1"/>
</dbReference>
<dbReference type="PANTHER" id="PTHR23309:SF49">
    <property type="entry name" value="PEROXISOMAL BIFUNCTIONAL ENZYME"/>
    <property type="match status" value="1"/>
</dbReference>
<dbReference type="Pfam" id="PF00725">
    <property type="entry name" value="3HCDH"/>
    <property type="match status" value="2"/>
</dbReference>
<dbReference type="Pfam" id="PF02737">
    <property type="entry name" value="3HCDH_N"/>
    <property type="match status" value="1"/>
</dbReference>
<dbReference type="Pfam" id="PF00378">
    <property type="entry name" value="ECH_1"/>
    <property type="match status" value="1"/>
</dbReference>
<dbReference type="SUPFAM" id="SSF48179">
    <property type="entry name" value="6-phosphogluconate dehydrogenase C-terminal domain-like"/>
    <property type="match status" value="2"/>
</dbReference>
<dbReference type="SUPFAM" id="SSF52096">
    <property type="entry name" value="ClpP/crotonase"/>
    <property type="match status" value="1"/>
</dbReference>
<dbReference type="SUPFAM" id="SSF51735">
    <property type="entry name" value="NAD(P)-binding Rossmann-fold domains"/>
    <property type="match status" value="1"/>
</dbReference>
<dbReference type="PROSITE" id="PS00166">
    <property type="entry name" value="ENOYL_COA_HYDRATASE"/>
    <property type="match status" value="1"/>
</dbReference>
<evidence type="ECO:0000250" key="1"/>
<evidence type="ECO:0000250" key="2">
    <source>
        <dbReference type="UniProtKB" id="P07896"/>
    </source>
</evidence>
<evidence type="ECO:0000250" key="3">
    <source>
        <dbReference type="UniProtKB" id="Q08426"/>
    </source>
</evidence>
<evidence type="ECO:0000250" key="4">
    <source>
        <dbReference type="UniProtKB" id="Q9DBM2"/>
    </source>
</evidence>
<evidence type="ECO:0000256" key="5">
    <source>
        <dbReference type="SAM" id="MobiDB-lite"/>
    </source>
</evidence>
<evidence type="ECO:0000305" key="6"/>
<reference key="1">
    <citation type="journal article" date="1996" name="FEBS Lett.">
        <title>Cloning and tissue expression of two cDNAs encoding the peroxisomal 2-enoyl-CoA hydratase/3-hydroxyacyl-CoA dehydrogenase in the guinea pig liver.</title>
        <authorList>
            <person name="Caira F."/>
            <person name="Cherkaoui-Malki M."/>
            <person name="Hoefler G."/>
            <person name="Latruffe N."/>
        </authorList>
    </citation>
    <scope>NUCLEOTIDE SEQUENCE [MRNA]</scope>
    <source>
        <tissue>Liver</tissue>
    </source>
</reference>
<accession>P55100</accession>
<organism>
    <name type="scientific">Cavia porcellus</name>
    <name type="common">Guinea pig</name>
    <dbReference type="NCBI Taxonomy" id="10141"/>
    <lineage>
        <taxon>Eukaryota</taxon>
        <taxon>Metazoa</taxon>
        <taxon>Chordata</taxon>
        <taxon>Craniata</taxon>
        <taxon>Vertebrata</taxon>
        <taxon>Euteleostomi</taxon>
        <taxon>Mammalia</taxon>
        <taxon>Eutheria</taxon>
        <taxon>Euarchontoglires</taxon>
        <taxon>Glires</taxon>
        <taxon>Rodentia</taxon>
        <taxon>Hystricomorpha</taxon>
        <taxon>Caviidae</taxon>
        <taxon>Cavia</taxon>
    </lineage>
</organism>
<feature type="chain" id="PRO_0000109246" description="Peroxisomal bifunctional enzyme">
    <location>
        <begin position="1"/>
        <end position="726"/>
    </location>
</feature>
<feature type="region of interest" description="Enoyl-CoA hydratase / isomerase">
    <location>
        <begin position="1"/>
        <end position="284"/>
    </location>
</feature>
<feature type="region of interest" description="3-hydroxyacyl-CoA dehydrogenase">
    <location>
        <begin position="285"/>
        <end position="575"/>
    </location>
</feature>
<feature type="region of interest" description="Disordered" evidence="5">
    <location>
        <begin position="352"/>
        <end position="371"/>
    </location>
</feature>
<feature type="short sequence motif" description="Microbody targeting signal" evidence="1">
    <location>
        <begin position="724"/>
        <end position="726"/>
    </location>
</feature>
<feature type="compositionally biased region" description="Polar residues" evidence="5">
    <location>
        <begin position="353"/>
        <end position="371"/>
    </location>
</feature>
<feature type="binding site" evidence="1">
    <location>
        <position position="103"/>
    </location>
    <ligand>
        <name>substrate</name>
    </ligand>
</feature>
<feature type="site" description="Important for catalytic activity" evidence="1">
    <location>
        <position position="106"/>
    </location>
</feature>
<feature type="site" description="Important for catalytic activity" evidence="1">
    <location>
        <position position="126"/>
    </location>
</feature>
<feature type="modified residue" description="N6-succinyllysine" evidence="4">
    <location>
        <position position="38"/>
    </location>
</feature>
<feature type="modified residue" description="N6-acetyllysine; alternate" evidence="3">
    <location>
        <position position="167"/>
    </location>
</feature>
<feature type="modified residue" description="N6-succinyllysine; alternate" evidence="4">
    <location>
        <position position="167"/>
    </location>
</feature>
<feature type="modified residue" description="N6-acetyllysine" evidence="3">
    <location>
        <position position="173"/>
    </location>
</feature>
<feature type="modified residue" description="N6-succinyllysine" evidence="4">
    <location>
        <position position="185"/>
    </location>
</feature>
<feature type="modified residue" description="N6-acetyllysine; alternate" evidence="4">
    <location>
        <position position="221"/>
    </location>
</feature>
<feature type="modified residue" description="N6-succinyllysine; alternate" evidence="4">
    <location>
        <position position="221"/>
    </location>
</feature>
<feature type="modified residue" description="N6-succinyllysine" evidence="4">
    <location>
        <position position="282"/>
    </location>
</feature>
<feature type="modified residue" description="N6-succinyllysine" evidence="4">
    <location>
        <position position="292"/>
    </location>
</feature>
<feature type="modified residue" description="N6-succinyllysine" evidence="4">
    <location>
        <position position="333"/>
    </location>
</feature>
<feature type="modified residue" description="N6-acetyllysine" evidence="3">
    <location>
        <position position="348"/>
    </location>
</feature>
<feature type="modified residue" description="N6-acetyllysine" evidence="4">
    <location>
        <position position="352"/>
    </location>
</feature>
<feature type="modified residue" description="N6-acetyllysine" evidence="4">
    <location>
        <position position="467"/>
    </location>
</feature>
<feature type="modified residue" description="N6-succinyllysine" evidence="4">
    <location>
        <position position="535"/>
    </location>
</feature>
<feature type="modified residue" description="N6-acetyllysine; alternate" evidence="3">
    <location>
        <position position="587"/>
    </location>
</feature>
<feature type="modified residue" description="N6-succinyllysine; alternate" evidence="4">
    <location>
        <position position="587"/>
    </location>
</feature>
<feature type="modified residue" description="N6-acetyllysine; alternate" evidence="4">
    <location>
        <position position="594"/>
    </location>
</feature>
<feature type="modified residue" description="N6-succinyllysine; alternate" evidence="4">
    <location>
        <position position="594"/>
    </location>
</feature>
<feature type="modified residue" description="N6-acetyllysine; alternate" evidence="4">
    <location>
        <position position="713"/>
    </location>
</feature>
<feature type="modified residue" description="N6-succinyllysine; alternate" evidence="4">
    <location>
        <position position="713"/>
    </location>
</feature>
<feature type="modified residue" description="N6-succinyllysine" evidence="4">
    <location>
        <position position="725"/>
    </location>
</feature>
<comment type="function">
    <text evidence="2 3 4">Peroxisomal trifunctional enzyme possessing 2-enoyl-CoA hydratase, 3-hydroxyacyl-CoA dehydrogenase, and delta 3, delta 2-enoyl-CoA isomerase activities. Catalyzes two of the four reactions of the long chain fatty acids peroxisomal beta-oxidation pathway (By similarity). Can also use branched-chain fatty acids such as 2-methyl-2E-butenoyl-CoA as a substrate, which is hydrated into (2S,3S)-3-hydroxy-2-methylbutanoyl-CoA (By similarity). Optimal isomerase for 2,5 double bonds into 3,5 form isomerization in a range of enoyl-CoA species. Also able to isomerize both 3-cis and 3-trans double bonds into the 2-trans form in a range of enoyl-CoA species (By similarity). Regulates the amount of medium-chain dicarboxylic fatty acids which are essential regulators of all fatty acid oxidation pathways (By similarity). Also involved in the degradation of long-chain dicarboxylic acids through peroxisomal beta-oxidation (By similarity).</text>
</comment>
<comment type="catalytic activity">
    <reaction evidence="3">
        <text>a (3S)-3-hydroxyacyl-CoA = a (2E)-enoyl-CoA + H2O</text>
        <dbReference type="Rhea" id="RHEA:16105"/>
        <dbReference type="ChEBI" id="CHEBI:15377"/>
        <dbReference type="ChEBI" id="CHEBI:57318"/>
        <dbReference type="ChEBI" id="CHEBI:58856"/>
        <dbReference type="EC" id="4.2.1.17"/>
    </reaction>
    <physiologicalReaction direction="left-to-right" evidence="3">
        <dbReference type="Rhea" id="RHEA:16106"/>
    </physiologicalReaction>
</comment>
<comment type="catalytic activity">
    <reaction evidence="2">
        <text>a 4-saturated-(3S)-3-hydroxyacyl-CoA = a (3E)-enoyl-CoA + H2O</text>
        <dbReference type="Rhea" id="RHEA:20724"/>
        <dbReference type="ChEBI" id="CHEBI:15377"/>
        <dbReference type="ChEBI" id="CHEBI:58521"/>
        <dbReference type="ChEBI" id="CHEBI:137480"/>
        <dbReference type="EC" id="4.2.1.17"/>
    </reaction>
    <physiologicalReaction direction="left-to-right" evidence="2">
        <dbReference type="Rhea" id="RHEA:20725"/>
    </physiologicalReaction>
</comment>
<comment type="catalytic activity">
    <reaction evidence="2">
        <text>a (3Z)-enoyl-CoA = a 4-saturated (2E)-enoyl-CoA</text>
        <dbReference type="Rhea" id="RHEA:45900"/>
        <dbReference type="ChEBI" id="CHEBI:85097"/>
        <dbReference type="ChEBI" id="CHEBI:85489"/>
        <dbReference type="EC" id="5.3.3.8"/>
    </reaction>
    <physiologicalReaction direction="left-to-right" evidence="2">
        <dbReference type="Rhea" id="RHEA:45901"/>
    </physiologicalReaction>
</comment>
<comment type="catalytic activity">
    <reaction evidence="2">
        <text>a (3E)-enoyl-CoA = a 4-saturated (2E)-enoyl-CoA</text>
        <dbReference type="Rhea" id="RHEA:45228"/>
        <dbReference type="ChEBI" id="CHEBI:58521"/>
        <dbReference type="ChEBI" id="CHEBI:85097"/>
        <dbReference type="EC" id="5.3.3.8"/>
    </reaction>
    <physiologicalReaction direction="left-to-right" evidence="2">
        <dbReference type="Rhea" id="RHEA:45229"/>
    </physiologicalReaction>
</comment>
<comment type="catalytic activity">
    <reaction evidence="3">
        <text>a (3S)-3-hydroxyacyl-CoA + NAD(+) = a 3-oxoacyl-CoA + NADH + H(+)</text>
        <dbReference type="Rhea" id="RHEA:22432"/>
        <dbReference type="ChEBI" id="CHEBI:15378"/>
        <dbReference type="ChEBI" id="CHEBI:57318"/>
        <dbReference type="ChEBI" id="CHEBI:57540"/>
        <dbReference type="ChEBI" id="CHEBI:57945"/>
        <dbReference type="ChEBI" id="CHEBI:90726"/>
        <dbReference type="EC" id="1.1.1.35"/>
    </reaction>
    <physiologicalReaction direction="left-to-right" evidence="3">
        <dbReference type="Rhea" id="RHEA:22433"/>
    </physiologicalReaction>
</comment>
<comment type="catalytic activity">
    <reaction evidence="2">
        <text>(2S,3S)-3-hydroxy-2-methylbutanoyl-CoA = (2E)-2-methylbut-2-enoyl-CoA + H2O</text>
        <dbReference type="Rhea" id="RHEA:31119"/>
        <dbReference type="ChEBI" id="CHEBI:15377"/>
        <dbReference type="ChEBI" id="CHEBI:57312"/>
        <dbReference type="ChEBI" id="CHEBI:57337"/>
    </reaction>
    <physiologicalReaction direction="right-to-left" evidence="2">
        <dbReference type="Rhea" id="RHEA:31121"/>
    </physiologicalReaction>
</comment>
<comment type="catalytic activity">
    <reaction evidence="3">
        <text>(3S)-hydroxyhexadecanoyl-CoA + NAD(+) = 3-oxohexadecanoyl-CoA + NADH + H(+)</text>
        <dbReference type="Rhea" id="RHEA:31159"/>
        <dbReference type="ChEBI" id="CHEBI:15378"/>
        <dbReference type="ChEBI" id="CHEBI:57349"/>
        <dbReference type="ChEBI" id="CHEBI:57540"/>
        <dbReference type="ChEBI" id="CHEBI:57945"/>
        <dbReference type="ChEBI" id="CHEBI:62613"/>
    </reaction>
    <physiologicalReaction direction="left-to-right" evidence="3">
        <dbReference type="Rhea" id="RHEA:31160"/>
    </physiologicalReaction>
</comment>
<comment type="catalytic activity">
    <reaction evidence="3">
        <text>(3S)-hydroxyhexadecanoyl-CoA = (2E)-hexadecenoyl-CoA + H2O</text>
        <dbReference type="Rhea" id="RHEA:31163"/>
        <dbReference type="ChEBI" id="CHEBI:15377"/>
        <dbReference type="ChEBI" id="CHEBI:61526"/>
        <dbReference type="ChEBI" id="CHEBI:62613"/>
    </reaction>
    <physiologicalReaction direction="right-to-left" evidence="3">
        <dbReference type="Rhea" id="RHEA:31165"/>
    </physiologicalReaction>
</comment>
<comment type="catalytic activity">
    <reaction evidence="3">
        <text>(2E)-hexadecenedioyl-CoA + H2O = (3S)-hydroxyhexadecanedioyl-CoA</text>
        <dbReference type="Rhea" id="RHEA:40259"/>
        <dbReference type="ChEBI" id="CHEBI:15377"/>
        <dbReference type="ChEBI" id="CHEBI:77075"/>
        <dbReference type="ChEBI" id="CHEBI:77080"/>
    </reaction>
    <physiologicalReaction direction="left-to-right" evidence="3">
        <dbReference type="Rhea" id="RHEA:40260"/>
    </physiologicalReaction>
</comment>
<comment type="catalytic activity">
    <reaction evidence="3">
        <text>(3S)-hydroxyhexadecanedioyl-CoA + NAD(+) = 3-oxohexadecanedioyl-CoA + NADH + H(+)</text>
        <dbReference type="Rhea" id="RHEA:40267"/>
        <dbReference type="ChEBI" id="CHEBI:15378"/>
        <dbReference type="ChEBI" id="CHEBI:57540"/>
        <dbReference type="ChEBI" id="CHEBI:57945"/>
        <dbReference type="ChEBI" id="CHEBI:77080"/>
        <dbReference type="ChEBI" id="CHEBI:77081"/>
    </reaction>
    <physiologicalReaction direction="left-to-right" evidence="3">
        <dbReference type="Rhea" id="RHEA:40268"/>
    </physiologicalReaction>
</comment>
<comment type="catalytic activity">
    <reaction evidence="2">
        <text>(3E,5Z)-tetradecadienoyl-CoA = (2E,5Z)-tetradecadienoyl-CoA</text>
        <dbReference type="Rhea" id="RHEA:47464"/>
        <dbReference type="ChEBI" id="CHEBI:71586"/>
        <dbReference type="ChEBI" id="CHEBI:87701"/>
    </reaction>
    <physiologicalReaction direction="right-to-left" evidence="2">
        <dbReference type="Rhea" id="RHEA:47466"/>
    </physiologicalReaction>
</comment>
<comment type="catalytic activity">
    <reaction evidence="2">
        <text>(3E,5Z)-octadienoyl-CoA = (2E,5Z)-octadienoyl-CoA</text>
        <dbReference type="Rhea" id="RHEA:49932"/>
        <dbReference type="ChEBI" id="CHEBI:85108"/>
        <dbReference type="ChEBI" id="CHEBI:131990"/>
    </reaction>
    <physiologicalReaction direction="right-to-left" evidence="2">
        <dbReference type="Rhea" id="RHEA:49934"/>
    </physiologicalReaction>
</comment>
<comment type="catalytic activity">
    <reaction evidence="2">
        <text>(3S)-hydroxydecanoyl-CoA + NAD(+) = 3-oxodecanoyl-CoA + NADH + H(+)</text>
        <dbReference type="Rhea" id="RHEA:31187"/>
        <dbReference type="ChEBI" id="CHEBI:15378"/>
        <dbReference type="ChEBI" id="CHEBI:57540"/>
        <dbReference type="ChEBI" id="CHEBI:57945"/>
        <dbReference type="ChEBI" id="CHEBI:62548"/>
        <dbReference type="ChEBI" id="CHEBI:62616"/>
    </reaction>
    <physiologicalReaction direction="left-to-right" evidence="2">
        <dbReference type="Rhea" id="RHEA:31188"/>
    </physiologicalReaction>
</comment>
<comment type="catalytic activity">
    <reaction evidence="2">
        <text>(3E)-decenoyl-CoA = (2E)-decenoyl-CoA</text>
        <dbReference type="Rhea" id="RHEA:45752"/>
        <dbReference type="ChEBI" id="CHEBI:61406"/>
        <dbReference type="ChEBI" id="CHEBI:84793"/>
    </reaction>
    <physiologicalReaction direction="left-to-right" evidence="2">
        <dbReference type="Rhea" id="RHEA:45753"/>
    </physiologicalReaction>
</comment>
<comment type="catalytic activity">
    <reaction evidence="2">
        <text>(3Z)-hexenoyl-CoA = (2E)-hexenoyl-CoA</text>
        <dbReference type="Rhea" id="RHEA:45748"/>
        <dbReference type="ChEBI" id="CHEBI:62077"/>
        <dbReference type="ChEBI" id="CHEBI:85415"/>
    </reaction>
    <physiologicalReaction direction="left-to-right" evidence="2">
        <dbReference type="Rhea" id="RHEA:45749"/>
    </physiologicalReaction>
</comment>
<comment type="catalytic activity">
    <reaction evidence="2">
        <text>(3E)-hexenoyl-CoA = (2E)-hexenoyl-CoA</text>
        <dbReference type="Rhea" id="RHEA:45736"/>
        <dbReference type="ChEBI" id="CHEBI:62077"/>
        <dbReference type="ChEBI" id="CHEBI:84790"/>
    </reaction>
    <physiologicalReaction direction="left-to-right" evidence="2">
        <dbReference type="Rhea" id="RHEA:45737"/>
    </physiologicalReaction>
</comment>
<comment type="catalytic activity">
    <reaction evidence="2">
        <text>(3S)-hydroxydecanoyl-CoA = (2E)-decenoyl-CoA + H2O</text>
        <dbReference type="Rhea" id="RHEA:31191"/>
        <dbReference type="ChEBI" id="CHEBI:15377"/>
        <dbReference type="ChEBI" id="CHEBI:61406"/>
        <dbReference type="ChEBI" id="CHEBI:62616"/>
    </reaction>
    <physiologicalReaction direction="right-to-left" evidence="2">
        <dbReference type="Rhea" id="RHEA:31193"/>
    </physiologicalReaction>
</comment>
<comment type="catalytic activity">
    <reaction evidence="2">
        <text>(3S)-hydroxyhexanoyl-CoA = (2E)-hexenoyl-CoA + H2O</text>
        <dbReference type="Rhea" id="RHEA:30547"/>
        <dbReference type="ChEBI" id="CHEBI:15377"/>
        <dbReference type="ChEBI" id="CHEBI:62075"/>
        <dbReference type="ChEBI" id="CHEBI:62077"/>
    </reaction>
    <physiologicalReaction direction="right-to-left" evidence="2">
        <dbReference type="Rhea" id="RHEA:30549"/>
    </physiologicalReaction>
</comment>
<comment type="activity regulation">
    <text evidence="3">Enzyme activity enhanced by acetylation.</text>
</comment>
<comment type="pathway">
    <text evidence="3">Lipid metabolism; fatty acid beta-oxidation.</text>
</comment>
<comment type="subunit">
    <text evidence="2">Monomer.</text>
</comment>
<comment type="subcellular location">
    <subcellularLocation>
        <location evidence="3">Peroxisome</location>
    </subcellularLocation>
</comment>
<comment type="PTM">
    <text evidence="3">Acetylated, leading to enhanced enzyme activity. Acetylation is enhanced by up to 80% after treatment either with trichostin A (TSA) or with nicotinamide (NAM) with highest increase on Lys-348. Acetylation and enzyme activity increased by about 1.5% on addition of fatty acids.</text>
</comment>
<comment type="similarity">
    <text evidence="6">In the N-terminal section; belongs to the enoyl-CoA hydratase/isomerase family.</text>
</comment>
<comment type="similarity">
    <text evidence="6">In the C-terminal section; belongs to the 3-hydroxyacyl-CoA dehydrogenase family.</text>
</comment>
<protein>
    <recommendedName>
        <fullName>Peroxisomal bifunctional enzyme</fullName>
        <shortName>PBE</shortName>
        <shortName>PBFE</shortName>
    </recommendedName>
    <alternativeName>
        <fullName>Multifunctional enzyme 1</fullName>
        <shortName>MFE1</shortName>
    </alternativeName>
    <domain>
        <recommendedName>
            <fullName>Enoyl-CoA hydratase/3,2-trans-enoyl-CoA isomerase</fullName>
            <ecNumber>4.2.1.17</ecNumber>
            <ecNumber>5.3.3.8</ecNumber>
        </recommendedName>
    </domain>
    <domain>
        <recommendedName>
            <fullName>3-hydroxyacyl-CoA dehydrogenase</fullName>
            <ecNumber>1.1.1.35</ecNumber>
        </recommendedName>
    </domain>
</protein>
<keyword id="KW-0007">Acetylation</keyword>
<keyword id="KW-0276">Fatty acid metabolism</keyword>
<keyword id="KW-0413">Isomerase</keyword>
<keyword id="KW-0443">Lipid metabolism</keyword>
<keyword id="KW-0456">Lyase</keyword>
<keyword id="KW-0511">Multifunctional enzyme</keyword>
<keyword id="KW-0520">NAD</keyword>
<keyword id="KW-0560">Oxidoreductase</keyword>
<keyword id="KW-0576">Peroxisome</keyword>
<keyword id="KW-1185">Reference proteome</keyword>
<name>ECHP_CAVPO</name>